<keyword id="KW-0749">Sporulation</keyword>
<keyword id="KW-0800">Toxin</keyword>
<keyword id="KW-0843">Virulence</keyword>
<accession>P0A375</accession>
<accession>P05518</accession>
<accession>P10327</accession>
<accession>Q03742</accession>
<accession>Q45725</accession>
<proteinExistence type="evidence at transcript level"/>
<comment type="function">
    <text>Promotes colloidosmotic lysis by binding to the midgut epithelial cells of many lepidopteran larvae including Spodoptera species.</text>
</comment>
<comment type="developmental stage">
    <text>The crystal protein is produced during sporulation and is accumulated both as an inclusion and as part of the spore coat.</text>
</comment>
<comment type="miscellaneous">
    <text>Toxic segment of the protein is located in the N-terminus.</text>
</comment>
<comment type="similarity">
    <text evidence="1">Belongs to the delta endotoxin family.</text>
</comment>
<sequence>MEENNQNQCIPYNCLSNPEEVLLDGERISTGNSSIDISLSLVQFLVSNFVPGGGFLVGLIDFVWGIVGPSQWDAFLVQIEQLINERIAEFARNAAIANLEGLGNNFNIYVEAFKEWEEDPNNPETRTRVIDRFRILDGLLERDIPSFRISGFEVPLLSVYAQAANLHLAILRDSVIFGERWGLTTINVNENYNRLIRHIDEYADHCANTYNRGLNNLPKSTYQDWITYNRLRRDLTLTVLDIAAFFPNYDNRRYPIQPVGQLTREVYTDPLINFNPQLQSVAQLPTFNVMESSRIRNPHLFDILNNLTIFTDWFSVGRNFYWGGHRVISSLIGGGNITSPIYGREANQEPPRSFTFNGPVFRTLSNPTLRLLQQPWPAPPFNLRGVEGVEFSTPTNSFTYRGRGTVDSLTELPPEDNSVPPREGYSHRLCHATFVQRSGTPFLTTGVVFSWTDRSATLTNTIDPERINQIPLVKGFRVWGGTSVITGPGFTGGDILRRNTFGDFVSLQVNINSPITQRYRLRFRYASSRDARVIVLTGAASTGVGGQVSVNMPLQKTMEIGENLTSRTFRYTDFSNPFSFRANPDIIGISEQPLFGAGSISSGELYIDKIEIILADATFEAESDLERAQKAVNALFTSSNQIGLKTDVTDYHIDQVSNLVDCLSDEFCLDEKRELSEKVKHAKRLSDERNLLQDPNFRGINRQPDRGWRGSTDITIQGGDDVFKENYVTLPGTVDECYPTYLYQKIDESKLKAYTRYELRGYIEDSQDLEIYLIRYNAKHEIVNVPGTGSLWPLSAQSPIGKCGEPNRCAPHLEWNPDLDCSCRDGEKCAHHSHHFTLDIDVGCTDLNEDLGVWVIFKIKTQDGHARLGNLEFLEEKPLLGEALARVKRAEKKWRDKREKLQLETNIVYKEAKESVDALFVNSQYDRLQVDTNIAMIHAADKRVHRIREAYLPELSVIPGVNAAIFEELEGRIFTAYSLYDARNVIKNGDFNNGLLCWNVKGHVDVEEQNNHRSVLVIPEWEAEVSQEVRVCPGRGYILRVTAYKEGYGEGCVTIHEIEDNTDELKFSNCVEEEVYPNNTVTCNNYTGTQEEYEGTYTSRNQGYDEAYGNNPSVPADYASVYEEKSYTDGRRENPCESNRGYGDYTPLPAGYVTKDLEYFPETDKVWIEIGETEGTFIVDSVELLLMEE</sequence>
<protein>
    <recommendedName>
        <fullName>Pesticidal crystal protein Cry1Ca</fullName>
    </recommendedName>
    <alternativeName>
        <fullName>134 kDa crystal protein</fullName>
    </alternativeName>
    <alternativeName>
        <fullName>Crystaline entomocidal protoxin</fullName>
    </alternativeName>
    <alternativeName>
        <fullName>Insecticidal delta-endotoxin CryIC(a)</fullName>
    </alternativeName>
</protein>
<name>CR1CA_BACTE</name>
<evidence type="ECO:0000305" key="1"/>
<gene>
    <name type="primary">cry1Ca</name>
    <name type="synonym">cryIC</name>
    <name type="synonym">cryIC(a)</name>
</gene>
<reference key="1">
    <citation type="journal article" date="1988" name="Nucleic Acids Res.">
        <title>Nucleotide sequence of crystal protein gene isolated from B. thuringiensis subspecies entomocidus 60.5 coding for a toxin highly active against Spodoptera species.</title>
        <authorList>
            <person name="Honee G."/>
            <person name="van der Salm T.P.M."/>
            <person name="Visser B."/>
        </authorList>
    </citation>
    <scope>NUCLEOTIDE SEQUENCE [GENOMIC DNA]</scope>
    <source>
        <strain>60.5</strain>
    </source>
</reference>
<dbReference type="EMBL" id="X07518">
    <property type="protein sequence ID" value="CAA30396.1"/>
    <property type="molecule type" value="Genomic_DNA"/>
</dbReference>
<dbReference type="PIR" id="S00944">
    <property type="entry name" value="S00944"/>
</dbReference>
<dbReference type="SMR" id="P0A375"/>
<dbReference type="GO" id="GO:0005102">
    <property type="term" value="F:signaling receptor binding"/>
    <property type="evidence" value="ECO:0007669"/>
    <property type="project" value="InterPro"/>
</dbReference>
<dbReference type="GO" id="GO:0090729">
    <property type="term" value="F:toxin activity"/>
    <property type="evidence" value="ECO:0007669"/>
    <property type="project" value="UniProtKB-KW"/>
</dbReference>
<dbReference type="GO" id="GO:0030435">
    <property type="term" value="P:sporulation resulting in formation of a cellular spore"/>
    <property type="evidence" value="ECO:0007669"/>
    <property type="project" value="UniProtKB-KW"/>
</dbReference>
<dbReference type="GO" id="GO:0001907">
    <property type="term" value="P:symbiont-mediated killing of host cell"/>
    <property type="evidence" value="ECO:0007669"/>
    <property type="project" value="InterPro"/>
</dbReference>
<dbReference type="CDD" id="cd04085">
    <property type="entry name" value="delta_endotoxin_C"/>
    <property type="match status" value="1"/>
</dbReference>
<dbReference type="Gene3D" id="2.60.120.260">
    <property type="entry name" value="Galactose-binding domain-like"/>
    <property type="match status" value="2"/>
</dbReference>
<dbReference type="Gene3D" id="2.100.10.10">
    <property type="entry name" value="Pesticidal crystal protein, central domain"/>
    <property type="match status" value="1"/>
</dbReference>
<dbReference type="Gene3D" id="1.20.190.10">
    <property type="entry name" value="Pesticidal crystal protein, N-terminal domain"/>
    <property type="match status" value="1"/>
</dbReference>
<dbReference type="InterPro" id="IPR048645">
    <property type="entry name" value="Cry1Ac-like_dom-VII"/>
</dbReference>
<dbReference type="InterPro" id="IPR041587">
    <property type="entry name" value="Cry_V"/>
</dbReference>
<dbReference type="InterPro" id="IPR008979">
    <property type="entry name" value="Galactose-bd-like_sf"/>
</dbReference>
<dbReference type="InterPro" id="IPR038979">
    <property type="entry name" value="Pest_crys"/>
</dbReference>
<dbReference type="InterPro" id="IPR054544">
    <property type="entry name" value="Pest_crys_Cry1Aa_dom-IV"/>
</dbReference>
<dbReference type="InterPro" id="IPR005638">
    <property type="entry name" value="Pest_crys_dom-III"/>
</dbReference>
<dbReference type="InterPro" id="IPR005639">
    <property type="entry name" value="Pest_crys_dom_I"/>
</dbReference>
<dbReference type="InterPro" id="IPR036716">
    <property type="entry name" value="Pest_crys_N_sf"/>
</dbReference>
<dbReference type="InterPro" id="IPR036399">
    <property type="entry name" value="Pest_cryst_cen_dom_sf"/>
</dbReference>
<dbReference type="InterPro" id="IPR001178">
    <property type="entry name" value="Pest_cryst_dom_II"/>
</dbReference>
<dbReference type="PANTHER" id="PTHR37003">
    <property type="entry name" value="ENDOTOXIN_N DOMAIN-CONTAINING PROTEIN-RELATED"/>
    <property type="match status" value="1"/>
</dbReference>
<dbReference type="PANTHER" id="PTHR37003:SF2">
    <property type="entry name" value="PESTICIDAL CRYSTAL PROTEIN N-TERMINAL DOMAIN-CONTAINING PROTEIN"/>
    <property type="match status" value="1"/>
</dbReference>
<dbReference type="Pfam" id="PF17997">
    <property type="entry name" value="Cry1Ac_D5"/>
    <property type="match status" value="1"/>
</dbReference>
<dbReference type="Pfam" id="PF21463">
    <property type="entry name" value="Cry1Ac_dom-VII"/>
    <property type="match status" value="1"/>
</dbReference>
<dbReference type="Pfam" id="PF03944">
    <property type="entry name" value="Endotoxin_C"/>
    <property type="match status" value="1"/>
</dbReference>
<dbReference type="Pfam" id="PF18449">
    <property type="entry name" value="Endotoxin_C2"/>
    <property type="match status" value="1"/>
</dbReference>
<dbReference type="Pfam" id="PF00555">
    <property type="entry name" value="Endotoxin_M"/>
    <property type="match status" value="1"/>
</dbReference>
<dbReference type="Pfam" id="PF03945">
    <property type="entry name" value="Endotoxin_N"/>
    <property type="match status" value="1"/>
</dbReference>
<dbReference type="SUPFAM" id="SSF51096">
    <property type="entry name" value="delta-Endotoxin (insectocide), middle domain"/>
    <property type="match status" value="1"/>
</dbReference>
<dbReference type="SUPFAM" id="SSF56849">
    <property type="entry name" value="delta-Endotoxin (insectocide), N-terminal domain"/>
    <property type="match status" value="1"/>
</dbReference>
<dbReference type="SUPFAM" id="SSF49785">
    <property type="entry name" value="Galactose-binding domain-like"/>
    <property type="match status" value="1"/>
</dbReference>
<organism>
    <name type="scientific">Bacillus thuringiensis subsp. entomocidus</name>
    <dbReference type="NCBI Taxonomy" id="1436"/>
    <lineage>
        <taxon>Bacteria</taxon>
        <taxon>Bacillati</taxon>
        <taxon>Bacillota</taxon>
        <taxon>Bacilli</taxon>
        <taxon>Bacillales</taxon>
        <taxon>Bacillaceae</taxon>
        <taxon>Bacillus</taxon>
        <taxon>Bacillus cereus group</taxon>
    </lineage>
</organism>
<feature type="chain" id="PRO_0000174036" description="Pesticidal crystal protein Cry1Ca">
    <location>
        <begin position="1"/>
        <end position="1189"/>
    </location>
</feature>